<accession>Q9D361</accession>
<accession>Q8BIU0</accession>
<accession>Q8BJ30</accession>
<accession>Q8CFF6</accession>
<accession>Q8VDQ5</accession>
<accession>Q9CSG3</accession>
<accession>Q9CVM5</accession>
<keyword id="KW-0025">Alternative splicing</keyword>
<keyword id="KW-1017">Isopeptide bond</keyword>
<keyword id="KW-0479">Metal-binding</keyword>
<keyword id="KW-0507">mRNA processing</keyword>
<keyword id="KW-0508">mRNA splicing</keyword>
<keyword id="KW-0539">Nucleus</keyword>
<keyword id="KW-1185">Reference proteome</keyword>
<keyword id="KW-0747">Spliceosome</keyword>
<keyword id="KW-0832">Ubl conjugation</keyword>
<keyword id="KW-0862">Zinc</keyword>
<keyword id="KW-0863">Zinc-finger</keyword>
<dbReference type="EMBL" id="AK007431">
    <property type="protein sequence ID" value="BAB25034.3"/>
    <property type="molecule type" value="mRNA"/>
</dbReference>
<dbReference type="EMBL" id="AK012916">
    <property type="protein sequence ID" value="BAB28547.1"/>
    <property type="molecule type" value="mRNA"/>
</dbReference>
<dbReference type="EMBL" id="AK018315">
    <property type="protein sequence ID" value="BAB31160.1"/>
    <property type="molecule type" value="mRNA"/>
</dbReference>
<dbReference type="EMBL" id="AK087789">
    <property type="protein sequence ID" value="BAC40003.1"/>
    <property type="molecule type" value="mRNA"/>
</dbReference>
<dbReference type="EMBL" id="BC021443">
    <property type="protein sequence ID" value="AAH21443.1"/>
    <property type="molecule type" value="mRNA"/>
</dbReference>
<dbReference type="EMBL" id="BC037073">
    <property type="protein sequence ID" value="AAH37073.1"/>
    <property type="status" value="ALT_SEQ"/>
    <property type="molecule type" value="mRNA"/>
</dbReference>
<dbReference type="CCDS" id="CCDS36635.1">
    <molecule id="Q9D361-1"/>
</dbReference>
<dbReference type="RefSeq" id="NP_080658.2">
    <molecule id="Q9D361-1"/>
    <property type="nucleotide sequence ID" value="NM_026382.2"/>
</dbReference>
<dbReference type="SMR" id="Q9D361"/>
<dbReference type="BioGRID" id="212448">
    <property type="interactions" value="2"/>
</dbReference>
<dbReference type="FunCoup" id="Q9D361">
    <property type="interactions" value="3846"/>
</dbReference>
<dbReference type="STRING" id="10090.ENSMUSP00000089230"/>
<dbReference type="iPTMnet" id="Q9D361"/>
<dbReference type="PhosphoSitePlus" id="Q9D361"/>
<dbReference type="PaxDb" id="10090-ENSMUSP00000089230"/>
<dbReference type="ProteomicsDB" id="257280">
    <molecule id="Q9D361-1"/>
</dbReference>
<dbReference type="ProteomicsDB" id="257281">
    <molecule id="Q9D361-2"/>
</dbReference>
<dbReference type="ProteomicsDB" id="257282">
    <molecule id="Q9D361-3"/>
</dbReference>
<dbReference type="Antibodypedia" id="24691">
    <property type="antibodies" value="91 antibodies from 15 providers"/>
</dbReference>
<dbReference type="DNASU" id="67797"/>
<dbReference type="Ensembl" id="ENSMUST00000091641.13">
    <molecule id="Q9D361-1"/>
    <property type="protein sequence ID" value="ENSMUSP00000089230.6"/>
    <property type="gene ID" value="ENSMUSG00000021431.17"/>
</dbReference>
<dbReference type="GeneID" id="67797"/>
<dbReference type="KEGG" id="mmu:67797"/>
<dbReference type="UCSC" id="uc007qdm.1">
    <molecule id="Q9D361-3"/>
    <property type="organism name" value="mouse"/>
</dbReference>
<dbReference type="UCSC" id="uc007qdo.1">
    <molecule id="Q9D361-1"/>
    <property type="organism name" value="mouse"/>
</dbReference>
<dbReference type="AGR" id="MGI:1915047"/>
<dbReference type="CTD" id="154007"/>
<dbReference type="MGI" id="MGI:1915047">
    <property type="gene designation" value="Snrnp48"/>
</dbReference>
<dbReference type="VEuPathDB" id="HostDB:ENSMUSG00000021431"/>
<dbReference type="eggNOG" id="ENOG502QW2V">
    <property type="taxonomic scope" value="Eukaryota"/>
</dbReference>
<dbReference type="GeneTree" id="ENSGT00390000004886"/>
<dbReference type="HOGENOM" id="CLU_072333_0_0_1"/>
<dbReference type="InParanoid" id="Q9D361"/>
<dbReference type="OMA" id="QEPMEQC"/>
<dbReference type="OrthoDB" id="69229at2759"/>
<dbReference type="PhylomeDB" id="Q9D361"/>
<dbReference type="TreeFam" id="TF332204"/>
<dbReference type="Reactome" id="R-MMU-72165">
    <property type="pathway name" value="mRNA Splicing - Minor Pathway"/>
</dbReference>
<dbReference type="BioGRID-ORCS" id="67797">
    <property type="hits" value="13 hits in 77 CRISPR screens"/>
</dbReference>
<dbReference type="ChiTaRS" id="Snrnp48">
    <property type="organism name" value="mouse"/>
</dbReference>
<dbReference type="PRO" id="PR:Q9D361"/>
<dbReference type="Proteomes" id="UP000000589">
    <property type="component" value="Chromosome 13"/>
</dbReference>
<dbReference type="RNAct" id="Q9D361">
    <property type="molecule type" value="protein"/>
</dbReference>
<dbReference type="Bgee" id="ENSMUSG00000021431">
    <property type="expression patterns" value="Expressed in urogenital fold and 256 other cell types or tissues"/>
</dbReference>
<dbReference type="ExpressionAtlas" id="Q9D361">
    <property type="expression patterns" value="baseline and differential"/>
</dbReference>
<dbReference type="GO" id="GO:0005829">
    <property type="term" value="C:cytosol"/>
    <property type="evidence" value="ECO:0007669"/>
    <property type="project" value="Ensembl"/>
</dbReference>
<dbReference type="GO" id="GO:0005654">
    <property type="term" value="C:nucleoplasm"/>
    <property type="evidence" value="ECO:0007669"/>
    <property type="project" value="Ensembl"/>
</dbReference>
<dbReference type="GO" id="GO:0005689">
    <property type="term" value="C:U12-type spliceosomal complex"/>
    <property type="evidence" value="ECO:0000250"/>
    <property type="project" value="HGNC-UCL"/>
</dbReference>
<dbReference type="GO" id="GO:0008270">
    <property type="term" value="F:zinc ion binding"/>
    <property type="evidence" value="ECO:0007669"/>
    <property type="project" value="UniProtKB-KW"/>
</dbReference>
<dbReference type="GO" id="GO:0006397">
    <property type="term" value="P:mRNA processing"/>
    <property type="evidence" value="ECO:0007669"/>
    <property type="project" value="UniProtKB-KW"/>
</dbReference>
<dbReference type="GO" id="GO:0008380">
    <property type="term" value="P:RNA splicing"/>
    <property type="evidence" value="ECO:0007669"/>
    <property type="project" value="UniProtKB-KW"/>
</dbReference>
<dbReference type="InterPro" id="IPR022776">
    <property type="entry name" value="TRM13/UPF0224_CHHC_Znf_dom"/>
</dbReference>
<dbReference type="InterPro" id="IPR051591">
    <property type="entry name" value="UPF0224_FAM112_RNA_Proc"/>
</dbReference>
<dbReference type="InterPro" id="IPR036236">
    <property type="entry name" value="Znf_C2H2_sf"/>
</dbReference>
<dbReference type="PANTHER" id="PTHR21402">
    <property type="entry name" value="GAMETOCYTE SPECIFIC FACTOR 1-RELATED"/>
    <property type="match status" value="1"/>
</dbReference>
<dbReference type="PANTHER" id="PTHR21402:SF10">
    <property type="entry name" value="U11_U12 SMALL NUCLEAR RIBONUCLEOPROTEIN 48 KDA PROTEIN"/>
    <property type="match status" value="1"/>
</dbReference>
<dbReference type="Pfam" id="PF05253">
    <property type="entry name" value="zf-U11-48K"/>
    <property type="match status" value="1"/>
</dbReference>
<dbReference type="SUPFAM" id="SSF57667">
    <property type="entry name" value="beta-beta-alpha zinc fingers"/>
    <property type="match status" value="1"/>
</dbReference>
<dbReference type="PROSITE" id="PS51800">
    <property type="entry name" value="ZF_CHHC_U11_48K"/>
    <property type="match status" value="1"/>
</dbReference>
<name>SNR48_MOUSE</name>
<protein>
    <recommendedName>
        <fullName>U11/U12 small nuclear ribonucleoprotein 48 kDa protein</fullName>
        <shortName>U11/U12 snRNP 48 kDa protein</shortName>
    </recommendedName>
</protein>
<feature type="chain" id="PRO_0000089545" description="U11/U12 small nuclear ribonucleoprotein 48 kDa protein">
    <location>
        <begin position="1"/>
        <end position="337"/>
    </location>
</feature>
<feature type="zinc finger region" description="CHHC U11-48K-type" evidence="3">
    <location>
        <begin position="55"/>
        <end position="82"/>
    </location>
</feature>
<feature type="region of interest" description="Disordered" evidence="4">
    <location>
        <begin position="255"/>
        <end position="337"/>
    </location>
</feature>
<feature type="compositionally biased region" description="Basic and acidic residues" evidence="4">
    <location>
        <begin position="255"/>
        <end position="276"/>
    </location>
</feature>
<feature type="compositionally biased region" description="Basic residues" evidence="4">
    <location>
        <begin position="294"/>
        <end position="310"/>
    </location>
</feature>
<feature type="compositionally biased region" description="Basic and acidic residues" evidence="4">
    <location>
        <begin position="311"/>
        <end position="326"/>
    </location>
</feature>
<feature type="compositionally biased region" description="Basic residues" evidence="4">
    <location>
        <begin position="327"/>
        <end position="337"/>
    </location>
</feature>
<feature type="binding site" evidence="3">
    <location>
        <position position="58"/>
    </location>
    <ligand>
        <name>Zn(2+)</name>
        <dbReference type="ChEBI" id="CHEBI:29105"/>
    </ligand>
</feature>
<feature type="binding site" evidence="3">
    <location>
        <position position="64"/>
    </location>
    <ligand>
        <name>Zn(2+)</name>
        <dbReference type="ChEBI" id="CHEBI:29105"/>
    </ligand>
</feature>
<feature type="binding site" evidence="3">
    <location>
        <position position="74"/>
    </location>
    <ligand>
        <name>Zn(2+)</name>
        <dbReference type="ChEBI" id="CHEBI:29105"/>
    </ligand>
</feature>
<feature type="binding site" evidence="3">
    <location>
        <position position="78"/>
    </location>
    <ligand>
        <name>Zn(2+)</name>
        <dbReference type="ChEBI" id="CHEBI:29105"/>
    </ligand>
</feature>
<feature type="cross-link" description="Glycyl lysine isopeptide (Lys-Gly) (interchain with G-Cter in SUMO2)" evidence="2">
    <location>
        <position position="87"/>
    </location>
</feature>
<feature type="cross-link" description="Glycyl lysine isopeptide (Lys-Gly) (interchain with G-Cter in SUMO2)" evidence="2">
    <location>
        <position position="104"/>
    </location>
</feature>
<feature type="splice variant" id="VSP_014642" description="In isoform 3." evidence="6">
    <original>RMYSSVP</original>
    <variation>SKCCSFS</variation>
    <location>
        <begin position="136"/>
        <end position="142"/>
    </location>
</feature>
<feature type="splice variant" id="VSP_014643" description="In isoform 3." evidence="6">
    <location>
        <begin position="143"/>
        <end position="337"/>
    </location>
</feature>
<feature type="splice variant" id="VSP_014644" description="In isoform 2." evidence="5">
    <location>
        <begin position="169"/>
        <end position="231"/>
    </location>
</feature>
<feature type="sequence conflict" description="In Ref. 1; BAB25034." evidence="7" ref="1">
    <original>RRR</original>
    <variation>GGW</variation>
    <location>
        <begin position="11"/>
        <end position="13"/>
    </location>
</feature>
<feature type="sequence conflict" description="In Ref. 1; BAC40003." evidence="7" ref="1">
    <original>M</original>
    <variation>R</variation>
    <location>
        <position position="93"/>
    </location>
</feature>
<feature type="sequence conflict" description="In Ref. 2; AAH21443." evidence="7" ref="2">
    <original>T</original>
    <variation>M</variation>
    <location>
        <position position="159"/>
    </location>
</feature>
<feature type="sequence conflict" description="In Ref. 1; BAB25034." evidence="7" ref="1">
    <original>R</original>
    <variation>G</variation>
    <location>
        <position position="221"/>
    </location>
</feature>
<feature type="sequence conflict" description="In Ref. 1; BAB31160." evidence="7" ref="1">
    <original>H</original>
    <variation>R</variation>
    <location>
        <position position="231"/>
    </location>
</feature>
<feature type="sequence conflict" description="In Ref. 1; BAB25034." evidence="7" ref="1">
    <original>S</original>
    <variation>L</variation>
    <location>
        <position position="293"/>
    </location>
</feature>
<feature type="sequence conflict" description="In Ref. 1; BAB25034." evidence="7" ref="1">
    <original>R</original>
    <variation>G</variation>
    <location>
        <position position="297"/>
    </location>
</feature>
<feature type="sequence conflict" description="In Ref. 1; BAB25034." evidence="7" ref="1">
    <original>SP</original>
    <variation>AT</variation>
    <location>
        <begin position="302"/>
        <end position="303"/>
    </location>
</feature>
<feature type="sequence conflict" description="In Ref. 2; AAH37073." evidence="7" ref="2">
    <original>R</original>
    <variation>Q</variation>
    <location>
        <position position="306"/>
    </location>
</feature>
<evidence type="ECO:0000250" key="1"/>
<evidence type="ECO:0000250" key="2">
    <source>
        <dbReference type="UniProtKB" id="Q6IEG0"/>
    </source>
</evidence>
<evidence type="ECO:0000255" key="3">
    <source>
        <dbReference type="PROSITE-ProRule" id="PRU01141"/>
    </source>
</evidence>
<evidence type="ECO:0000256" key="4">
    <source>
        <dbReference type="SAM" id="MobiDB-lite"/>
    </source>
</evidence>
<evidence type="ECO:0000303" key="5">
    <source>
    </source>
</evidence>
<evidence type="ECO:0000303" key="6">
    <source>
    </source>
</evidence>
<evidence type="ECO:0000305" key="7"/>
<proteinExistence type="evidence at transcript level"/>
<organism>
    <name type="scientific">Mus musculus</name>
    <name type="common">Mouse</name>
    <dbReference type="NCBI Taxonomy" id="10090"/>
    <lineage>
        <taxon>Eukaryota</taxon>
        <taxon>Metazoa</taxon>
        <taxon>Chordata</taxon>
        <taxon>Craniata</taxon>
        <taxon>Vertebrata</taxon>
        <taxon>Euteleostomi</taxon>
        <taxon>Mammalia</taxon>
        <taxon>Eutheria</taxon>
        <taxon>Euarchontoglires</taxon>
        <taxon>Glires</taxon>
        <taxon>Rodentia</taxon>
        <taxon>Myomorpha</taxon>
        <taxon>Muroidea</taxon>
        <taxon>Muridae</taxon>
        <taxon>Murinae</taxon>
        <taxon>Mus</taxon>
        <taxon>Mus</taxon>
    </lineage>
</organism>
<sequence>METEPPPLEERRRLQEELSEFVESCCRTLEEVTASLGWSLDQLDPGDEAEAEDEIAICPYDSNHRMPKSSLTKHMESCRLRKLGYTKEEENEMYNPTFFYENLKIPSVTLNKDSQFQIIKQARTTAGKDGDCYSQRMYSSVPVEVPLNHKRSVCDLTQTDRLALYDFVIEETKKKRSGPQVIENDSDLFVDLAAKVNQDNSRKSPKSYLEILAEVRDYKRRRQSYRAKNVHITKKSYTEVIRDVIKVHMEELSSHWQEEQGRAGDAAEKNEERRSASVDSRQSGGSYLDVESSRHRRARSRSPHKRKRNKDKSSESRRRKERDGERHHSHKRRKQKI</sequence>
<reference key="1">
    <citation type="journal article" date="2005" name="Science">
        <title>The transcriptional landscape of the mammalian genome.</title>
        <authorList>
            <person name="Carninci P."/>
            <person name="Kasukawa T."/>
            <person name="Katayama S."/>
            <person name="Gough J."/>
            <person name="Frith M.C."/>
            <person name="Maeda N."/>
            <person name="Oyama R."/>
            <person name="Ravasi T."/>
            <person name="Lenhard B."/>
            <person name="Wells C."/>
            <person name="Kodzius R."/>
            <person name="Shimokawa K."/>
            <person name="Bajic V.B."/>
            <person name="Brenner S.E."/>
            <person name="Batalov S."/>
            <person name="Forrest A.R."/>
            <person name="Zavolan M."/>
            <person name="Davis M.J."/>
            <person name="Wilming L.G."/>
            <person name="Aidinis V."/>
            <person name="Allen J.E."/>
            <person name="Ambesi-Impiombato A."/>
            <person name="Apweiler R."/>
            <person name="Aturaliya R.N."/>
            <person name="Bailey T.L."/>
            <person name="Bansal M."/>
            <person name="Baxter L."/>
            <person name="Beisel K.W."/>
            <person name="Bersano T."/>
            <person name="Bono H."/>
            <person name="Chalk A.M."/>
            <person name="Chiu K.P."/>
            <person name="Choudhary V."/>
            <person name="Christoffels A."/>
            <person name="Clutterbuck D.R."/>
            <person name="Crowe M.L."/>
            <person name="Dalla E."/>
            <person name="Dalrymple B.P."/>
            <person name="de Bono B."/>
            <person name="Della Gatta G."/>
            <person name="di Bernardo D."/>
            <person name="Down T."/>
            <person name="Engstrom P."/>
            <person name="Fagiolini M."/>
            <person name="Faulkner G."/>
            <person name="Fletcher C.F."/>
            <person name="Fukushima T."/>
            <person name="Furuno M."/>
            <person name="Futaki S."/>
            <person name="Gariboldi M."/>
            <person name="Georgii-Hemming P."/>
            <person name="Gingeras T.R."/>
            <person name="Gojobori T."/>
            <person name="Green R.E."/>
            <person name="Gustincich S."/>
            <person name="Harbers M."/>
            <person name="Hayashi Y."/>
            <person name="Hensch T.K."/>
            <person name="Hirokawa N."/>
            <person name="Hill D."/>
            <person name="Huminiecki L."/>
            <person name="Iacono M."/>
            <person name="Ikeo K."/>
            <person name="Iwama A."/>
            <person name="Ishikawa T."/>
            <person name="Jakt M."/>
            <person name="Kanapin A."/>
            <person name="Katoh M."/>
            <person name="Kawasawa Y."/>
            <person name="Kelso J."/>
            <person name="Kitamura H."/>
            <person name="Kitano H."/>
            <person name="Kollias G."/>
            <person name="Krishnan S.P."/>
            <person name="Kruger A."/>
            <person name="Kummerfeld S.K."/>
            <person name="Kurochkin I.V."/>
            <person name="Lareau L.F."/>
            <person name="Lazarevic D."/>
            <person name="Lipovich L."/>
            <person name="Liu J."/>
            <person name="Liuni S."/>
            <person name="McWilliam S."/>
            <person name="Madan Babu M."/>
            <person name="Madera M."/>
            <person name="Marchionni L."/>
            <person name="Matsuda H."/>
            <person name="Matsuzawa S."/>
            <person name="Miki H."/>
            <person name="Mignone F."/>
            <person name="Miyake S."/>
            <person name="Morris K."/>
            <person name="Mottagui-Tabar S."/>
            <person name="Mulder N."/>
            <person name="Nakano N."/>
            <person name="Nakauchi H."/>
            <person name="Ng P."/>
            <person name="Nilsson R."/>
            <person name="Nishiguchi S."/>
            <person name="Nishikawa S."/>
            <person name="Nori F."/>
            <person name="Ohara O."/>
            <person name="Okazaki Y."/>
            <person name="Orlando V."/>
            <person name="Pang K.C."/>
            <person name="Pavan W.J."/>
            <person name="Pavesi G."/>
            <person name="Pesole G."/>
            <person name="Petrovsky N."/>
            <person name="Piazza S."/>
            <person name="Reed J."/>
            <person name="Reid J.F."/>
            <person name="Ring B.Z."/>
            <person name="Ringwald M."/>
            <person name="Rost B."/>
            <person name="Ruan Y."/>
            <person name="Salzberg S.L."/>
            <person name="Sandelin A."/>
            <person name="Schneider C."/>
            <person name="Schoenbach C."/>
            <person name="Sekiguchi K."/>
            <person name="Semple C.A."/>
            <person name="Seno S."/>
            <person name="Sessa L."/>
            <person name="Sheng Y."/>
            <person name="Shibata Y."/>
            <person name="Shimada H."/>
            <person name="Shimada K."/>
            <person name="Silva D."/>
            <person name="Sinclair B."/>
            <person name="Sperling S."/>
            <person name="Stupka E."/>
            <person name="Sugiura K."/>
            <person name="Sultana R."/>
            <person name="Takenaka Y."/>
            <person name="Taki K."/>
            <person name="Tammoja K."/>
            <person name="Tan S.L."/>
            <person name="Tang S."/>
            <person name="Taylor M.S."/>
            <person name="Tegner J."/>
            <person name="Teichmann S.A."/>
            <person name="Ueda H.R."/>
            <person name="van Nimwegen E."/>
            <person name="Verardo R."/>
            <person name="Wei C.L."/>
            <person name="Yagi K."/>
            <person name="Yamanishi H."/>
            <person name="Zabarovsky E."/>
            <person name="Zhu S."/>
            <person name="Zimmer A."/>
            <person name="Hide W."/>
            <person name="Bult C."/>
            <person name="Grimmond S.M."/>
            <person name="Teasdale R.D."/>
            <person name="Liu E.T."/>
            <person name="Brusic V."/>
            <person name="Quackenbush J."/>
            <person name="Wahlestedt C."/>
            <person name="Mattick J.S."/>
            <person name="Hume D.A."/>
            <person name="Kai C."/>
            <person name="Sasaki D."/>
            <person name="Tomaru Y."/>
            <person name="Fukuda S."/>
            <person name="Kanamori-Katayama M."/>
            <person name="Suzuki M."/>
            <person name="Aoki J."/>
            <person name="Arakawa T."/>
            <person name="Iida J."/>
            <person name="Imamura K."/>
            <person name="Itoh M."/>
            <person name="Kato T."/>
            <person name="Kawaji H."/>
            <person name="Kawagashira N."/>
            <person name="Kawashima T."/>
            <person name="Kojima M."/>
            <person name="Kondo S."/>
            <person name="Konno H."/>
            <person name="Nakano K."/>
            <person name="Ninomiya N."/>
            <person name="Nishio T."/>
            <person name="Okada M."/>
            <person name="Plessy C."/>
            <person name="Shibata K."/>
            <person name="Shiraki T."/>
            <person name="Suzuki S."/>
            <person name="Tagami M."/>
            <person name="Waki K."/>
            <person name="Watahiki A."/>
            <person name="Okamura-Oho Y."/>
            <person name="Suzuki H."/>
            <person name="Kawai J."/>
            <person name="Hayashizaki Y."/>
        </authorList>
    </citation>
    <scope>NUCLEOTIDE SEQUENCE [LARGE SCALE MRNA] (ISOFORMS 1 AND 3)</scope>
    <source>
        <strain>C57BL/6J</strain>
        <tissue>Cerebellum</tissue>
        <tissue>Embryo</tissue>
        <tissue>Ovary</tissue>
        <tissue>Pancreas</tissue>
    </source>
</reference>
<reference key="2">
    <citation type="journal article" date="2004" name="Genome Res.">
        <title>The status, quality, and expansion of the NIH full-length cDNA project: the Mammalian Gene Collection (MGC).</title>
        <authorList>
            <consortium name="The MGC Project Team"/>
        </authorList>
    </citation>
    <scope>NUCLEOTIDE SEQUENCE [LARGE SCALE MRNA] (ISOFORM 2)</scope>
    <source>
        <strain>Czech II</strain>
        <tissue>Mammary gland</tissue>
    </source>
</reference>
<gene>
    <name type="primary">Snrnp48</name>
</gene>
<comment type="function">
    <text evidence="1">Likely involved in U12-type 5' splice site recognition.</text>
</comment>
<comment type="subunit">
    <text evidence="1">Component of the U11/U12 snRNPs that are part of the U12-type spliceosome. Not found in the major spliceosome (By similarity).</text>
</comment>
<comment type="subcellular location">
    <subcellularLocation>
        <location evidence="1">Nucleus</location>
    </subcellularLocation>
</comment>
<comment type="alternative products">
    <event type="alternative splicing"/>
    <isoform>
        <id>Q9D361-1</id>
        <name>1</name>
        <sequence type="displayed"/>
    </isoform>
    <isoform>
        <id>Q9D361-2</id>
        <name>2</name>
        <sequence type="described" ref="VSP_014644"/>
    </isoform>
    <isoform>
        <id>Q9D361-3</id>
        <name>3</name>
        <sequence type="described" ref="VSP_014642 VSP_014643"/>
    </isoform>
</comment>
<comment type="domain">
    <text evidence="1">The CHHC region interacts with the 5' splice site of the U12-type Intron.</text>
</comment>
<comment type="sequence caution" evidence="7">
    <conflict type="miscellaneous discrepancy">
        <sequence resource="EMBL-CDS" id="AAH37073"/>
    </conflict>
    <text>Contaminating sequence. Potential poly-A sequence.</text>
</comment>